<evidence type="ECO:0000255" key="1">
    <source>
        <dbReference type="HAMAP-Rule" id="MF_01423"/>
    </source>
</evidence>
<proteinExistence type="evidence at transcript level"/>
<accession>B7L9U8</accession>
<dbReference type="EMBL" id="CU928145">
    <property type="protein sequence ID" value="CAU98203.1"/>
    <property type="molecule type" value="Genomic_DNA"/>
</dbReference>
<dbReference type="RefSeq" id="WP_001197857.1">
    <property type="nucleotide sequence ID" value="NC_011748.1"/>
</dbReference>
<dbReference type="SMR" id="B7L9U8"/>
<dbReference type="KEGG" id="eck:EC55989_2331"/>
<dbReference type="HOGENOM" id="CLU_002755_1_2_6"/>
<dbReference type="Proteomes" id="UP000000746">
    <property type="component" value="Chromosome"/>
</dbReference>
<dbReference type="GO" id="GO:0005886">
    <property type="term" value="C:plasma membrane"/>
    <property type="evidence" value="ECO:0007669"/>
    <property type="project" value="UniProtKB-SubCell"/>
</dbReference>
<dbReference type="GO" id="GO:0042910">
    <property type="term" value="F:xenobiotic transmembrane transporter activity"/>
    <property type="evidence" value="ECO:0007669"/>
    <property type="project" value="TreeGrafter"/>
</dbReference>
<dbReference type="FunFam" id="1.20.1640.10:FF:000001">
    <property type="entry name" value="Efflux pump membrane transporter"/>
    <property type="match status" value="1"/>
</dbReference>
<dbReference type="FunFam" id="3.30.70.1430:FF:000001">
    <property type="entry name" value="Efflux pump membrane transporter"/>
    <property type="match status" value="1"/>
</dbReference>
<dbReference type="FunFam" id="3.30.2090.10:FF:000003">
    <property type="entry name" value="Multidrug resistance protein MdtB"/>
    <property type="match status" value="1"/>
</dbReference>
<dbReference type="FunFam" id="3.30.2090.10:FF:000006">
    <property type="entry name" value="Multidrug resistance protein MdtB"/>
    <property type="match status" value="1"/>
</dbReference>
<dbReference type="Gene3D" id="3.30.70.1430">
    <property type="entry name" value="Multidrug efflux transporter AcrB pore domain"/>
    <property type="match status" value="2"/>
</dbReference>
<dbReference type="Gene3D" id="3.30.70.1440">
    <property type="entry name" value="Multidrug efflux transporter AcrB pore domain"/>
    <property type="match status" value="1"/>
</dbReference>
<dbReference type="Gene3D" id="3.30.70.1320">
    <property type="entry name" value="Multidrug efflux transporter AcrB pore domain like"/>
    <property type="match status" value="1"/>
</dbReference>
<dbReference type="Gene3D" id="3.30.2090.10">
    <property type="entry name" value="Multidrug efflux transporter AcrB TolC docking domain, DN and DC subdomains"/>
    <property type="match status" value="2"/>
</dbReference>
<dbReference type="Gene3D" id="1.20.1640.10">
    <property type="entry name" value="Multidrug efflux transporter AcrB transmembrane domain"/>
    <property type="match status" value="2"/>
</dbReference>
<dbReference type="HAMAP" id="MF_01423">
    <property type="entry name" value="MdtB"/>
    <property type="match status" value="1"/>
</dbReference>
<dbReference type="InterPro" id="IPR027463">
    <property type="entry name" value="AcrB_DN_DC_subdom"/>
</dbReference>
<dbReference type="InterPro" id="IPR001036">
    <property type="entry name" value="Acrflvin-R"/>
</dbReference>
<dbReference type="InterPro" id="IPR022831">
    <property type="entry name" value="Multidrug-R_MdtB"/>
</dbReference>
<dbReference type="NCBIfam" id="NF007798">
    <property type="entry name" value="PRK10503.1"/>
    <property type="match status" value="1"/>
</dbReference>
<dbReference type="NCBIfam" id="NF033617">
    <property type="entry name" value="RND_permease_2"/>
    <property type="match status" value="1"/>
</dbReference>
<dbReference type="PANTHER" id="PTHR32063">
    <property type="match status" value="1"/>
</dbReference>
<dbReference type="PANTHER" id="PTHR32063:SF21">
    <property type="entry name" value="MULTIDRUG RESISTANCE PROTEIN MDTB"/>
    <property type="match status" value="1"/>
</dbReference>
<dbReference type="Pfam" id="PF00873">
    <property type="entry name" value="ACR_tran"/>
    <property type="match status" value="1"/>
</dbReference>
<dbReference type="PRINTS" id="PR00702">
    <property type="entry name" value="ACRIFLAVINRP"/>
</dbReference>
<dbReference type="SUPFAM" id="SSF82693">
    <property type="entry name" value="Multidrug efflux transporter AcrB pore domain, PN1, PN2, PC1 and PC2 subdomains"/>
    <property type="match status" value="3"/>
</dbReference>
<dbReference type="SUPFAM" id="SSF82714">
    <property type="entry name" value="Multidrug efflux transporter AcrB TolC docking domain, DN and DC subdomains"/>
    <property type="match status" value="2"/>
</dbReference>
<dbReference type="SUPFAM" id="SSF82866">
    <property type="entry name" value="Multidrug efflux transporter AcrB transmembrane domain"/>
    <property type="match status" value="2"/>
</dbReference>
<name>MDTB_ECO55</name>
<comment type="function">
    <text evidence="1">The MdtABC tripartite complex confers resistance against novobiocin and deoxycholate.</text>
</comment>
<comment type="subunit">
    <text evidence="1">Part of a tripartite efflux system composed of MdtA, MdtB and MdtC. MdtB forms a heteromultimer with MdtC.</text>
</comment>
<comment type="subcellular location">
    <subcellularLocation>
        <location evidence="1">Cell inner membrane</location>
        <topology evidence="1">Multi-pass membrane protein</topology>
    </subcellularLocation>
</comment>
<comment type="induction">
    <text>The mdtABC operon is transcriptionally activated by BaeR.</text>
</comment>
<comment type="similarity">
    <text evidence="1">Belongs to the resistance-nodulation-cell division (RND) (TC 2.A.6) family. MdtB subfamily.</text>
</comment>
<organism>
    <name type="scientific">Escherichia coli (strain 55989 / EAEC)</name>
    <dbReference type="NCBI Taxonomy" id="585055"/>
    <lineage>
        <taxon>Bacteria</taxon>
        <taxon>Pseudomonadati</taxon>
        <taxon>Pseudomonadota</taxon>
        <taxon>Gammaproteobacteria</taxon>
        <taxon>Enterobacterales</taxon>
        <taxon>Enterobacteriaceae</taxon>
        <taxon>Escherichia</taxon>
    </lineage>
</organism>
<keyword id="KW-0997">Cell inner membrane</keyword>
<keyword id="KW-1003">Cell membrane</keyword>
<keyword id="KW-0472">Membrane</keyword>
<keyword id="KW-1185">Reference proteome</keyword>
<keyword id="KW-0812">Transmembrane</keyword>
<keyword id="KW-1133">Transmembrane helix</keyword>
<keyword id="KW-0813">Transport</keyword>
<reference key="1">
    <citation type="journal article" date="2009" name="PLoS Genet.">
        <title>Organised genome dynamics in the Escherichia coli species results in highly diverse adaptive paths.</title>
        <authorList>
            <person name="Touchon M."/>
            <person name="Hoede C."/>
            <person name="Tenaillon O."/>
            <person name="Barbe V."/>
            <person name="Baeriswyl S."/>
            <person name="Bidet P."/>
            <person name="Bingen E."/>
            <person name="Bonacorsi S."/>
            <person name="Bouchier C."/>
            <person name="Bouvet O."/>
            <person name="Calteau A."/>
            <person name="Chiapello H."/>
            <person name="Clermont O."/>
            <person name="Cruveiller S."/>
            <person name="Danchin A."/>
            <person name="Diard M."/>
            <person name="Dossat C."/>
            <person name="Karoui M.E."/>
            <person name="Frapy E."/>
            <person name="Garry L."/>
            <person name="Ghigo J.M."/>
            <person name="Gilles A.M."/>
            <person name="Johnson J."/>
            <person name="Le Bouguenec C."/>
            <person name="Lescat M."/>
            <person name="Mangenot S."/>
            <person name="Martinez-Jehanne V."/>
            <person name="Matic I."/>
            <person name="Nassif X."/>
            <person name="Oztas S."/>
            <person name="Petit M.A."/>
            <person name="Pichon C."/>
            <person name="Rouy Z."/>
            <person name="Ruf C.S."/>
            <person name="Schneider D."/>
            <person name="Tourret J."/>
            <person name="Vacherie B."/>
            <person name="Vallenet D."/>
            <person name="Medigue C."/>
            <person name="Rocha E.P.C."/>
            <person name="Denamur E."/>
        </authorList>
    </citation>
    <scope>NUCLEOTIDE SEQUENCE [LARGE SCALE GENOMIC DNA]</scope>
    <source>
        <strain>55989 / EAEC</strain>
    </source>
</reference>
<sequence>MQVLPPSSTGGPSRLFIMRPVATTLLMVAILLAGIIGYRALPVSALPEVDYPTIQVVTLYPGASPDVMTSAVTAPLERQFGQMSGLKQMSSQSSGGASVITLQFQLTLPLDVAEQEVQAAINAATNLLPSDLPNPPVYSKVNPADPPIMTLAVTSTAMPMTQVEDMVETRVAQKISQISGVGLVTLSGGQRPAVRVKLNAQAIAALGLTSETVRTAITGANVNSAKGSLDGPSRAVTLSANDQMQSAEEYRQLIIAYQNGAPIRLGDVATVEQGAENSWLGAWANKEQAIVMNVQRQPGANIISTADSIRQMLPQLTESLPKSVKVTVLSDRTTNIRASVDDTQFELMMAIALVVMIIYLFLRNIPATIIPGVAVPLSLIGTFAVMVFLDFSINNLTLMALTIATGFVVDDAIVVIENISRYIEKGEKPLAAALKGAGEIGFTIISLTFSLIAVLIPLLFMGDIVGRLFREFAITLAVAILISAVVSLTLTPMMCARMLSQESLRKQNRFSRASEKMFDRIIAAYGQGLAKVLNHPWLTLSVALSTLLLSVLLWVFIPKGFFPVQDNGIIQGTLQAPQSSSFANMAQRQRQVADVILQDPAVQSLTSFVGVDGTNPSLNSARLQINLKPLEERDDRVQKVIARLQTAVDKVPGVDLFLQPTQDLTIDTQVSRTQYQFTLQATSLDALSTWVPQLMEKLQQLPQLSDVSSDWQDKGLVAYVNVDRDSASRLGISMADVDNALYNAFGQRLISTIYTQANQYRVVLEHNTENTPGLAALDTIRLTSSDGGVVPLSSIAKIEQRFAPLSINHLDQFPVTTISFNVPDNYSLGDAVQAIMDTEKTLNLPVDITTQFQGSTLAFQSALGSTVWLIVAAVVAMYIVLGILYESFIHPITILSTLPTAGVGALLALMIAGSELDVIAIIGIILLIGIVKKNAIMMIDFALAAEREQGMSPRDAIYQACLLRFRPILMTTLAALLGALPLMLSTGVGAELRRPLGIGMVGGLIVSQVLTLFTTPVIYLLFDRLALWTKSRFARHEEEA</sequence>
<feature type="chain" id="PRO_1000184865" description="Multidrug resistance protein MdtB">
    <location>
        <begin position="1"/>
        <end position="1040"/>
    </location>
</feature>
<feature type="transmembrane region" description="Helical" evidence="1">
    <location>
        <begin position="16"/>
        <end position="36"/>
    </location>
</feature>
<feature type="transmembrane region" description="Helical" evidence="1">
    <location>
        <begin position="347"/>
        <end position="367"/>
    </location>
</feature>
<feature type="transmembrane region" description="Helical" evidence="1">
    <location>
        <begin position="369"/>
        <end position="389"/>
    </location>
</feature>
<feature type="transmembrane region" description="Helical" evidence="1">
    <location>
        <begin position="396"/>
        <end position="416"/>
    </location>
</feature>
<feature type="transmembrane region" description="Helical" evidence="1">
    <location>
        <begin position="440"/>
        <end position="460"/>
    </location>
</feature>
<feature type="transmembrane region" description="Helical" evidence="1">
    <location>
        <begin position="472"/>
        <end position="492"/>
    </location>
</feature>
<feature type="transmembrane region" description="Helical" evidence="1">
    <location>
        <begin position="537"/>
        <end position="557"/>
    </location>
</feature>
<feature type="transmembrane region" description="Helical" evidence="1">
    <location>
        <begin position="863"/>
        <end position="883"/>
    </location>
</feature>
<feature type="transmembrane region" description="Helical" evidence="1">
    <location>
        <begin position="888"/>
        <end position="908"/>
    </location>
</feature>
<feature type="transmembrane region" description="Helical" evidence="1">
    <location>
        <begin position="911"/>
        <end position="931"/>
    </location>
</feature>
<feature type="transmembrane region" description="Helical" evidence="1">
    <location>
        <begin position="968"/>
        <end position="988"/>
    </location>
</feature>
<feature type="transmembrane region" description="Helical" evidence="1">
    <location>
        <begin position="998"/>
        <end position="1018"/>
    </location>
</feature>
<protein>
    <recommendedName>
        <fullName evidence="1">Multidrug resistance protein MdtB</fullName>
    </recommendedName>
    <alternativeName>
        <fullName evidence="1">Multidrug transporter MdtB</fullName>
    </alternativeName>
</protein>
<gene>
    <name evidence="1" type="primary">mdtB</name>
    <name type="ordered locus">EC55989_2331</name>
</gene>